<feature type="chain" id="PRO_0000101907" description="UDP-N-acetylmuramoyl-L-alanyl-D-glutamate--2,6-diaminopimelate ligase">
    <location>
        <begin position="1"/>
        <end position="506"/>
    </location>
</feature>
<feature type="short sequence motif" description="Meso-diaminopimelate recognition motif">
    <location>
        <begin position="425"/>
        <end position="428"/>
    </location>
</feature>
<feature type="binding site" evidence="1">
    <location>
        <position position="38"/>
    </location>
    <ligand>
        <name>UDP-N-acetyl-alpha-D-muramoyl-L-alanyl-D-glutamate</name>
        <dbReference type="ChEBI" id="CHEBI:83900"/>
    </ligand>
</feature>
<feature type="binding site" evidence="1">
    <location>
        <begin position="124"/>
        <end position="130"/>
    </location>
    <ligand>
        <name>ATP</name>
        <dbReference type="ChEBI" id="CHEBI:30616"/>
    </ligand>
</feature>
<feature type="binding site" evidence="1">
    <location>
        <begin position="166"/>
        <end position="167"/>
    </location>
    <ligand>
        <name>UDP-N-acetyl-alpha-D-muramoyl-L-alanyl-D-glutamate</name>
        <dbReference type="ChEBI" id="CHEBI:83900"/>
    </ligand>
</feature>
<feature type="binding site" evidence="1">
    <location>
        <position position="193"/>
    </location>
    <ligand>
        <name>UDP-N-acetyl-alpha-D-muramoyl-L-alanyl-D-glutamate</name>
        <dbReference type="ChEBI" id="CHEBI:83900"/>
    </ligand>
</feature>
<feature type="binding site" evidence="1">
    <location>
        <position position="201"/>
    </location>
    <ligand>
        <name>UDP-N-acetyl-alpha-D-muramoyl-L-alanyl-D-glutamate</name>
        <dbReference type="ChEBI" id="CHEBI:83900"/>
    </ligand>
</feature>
<feature type="binding site" evidence="1">
    <location>
        <position position="401"/>
    </location>
    <ligand>
        <name>meso-2,6-diaminopimelate</name>
        <dbReference type="ChEBI" id="CHEBI:57791"/>
    </ligand>
</feature>
<feature type="binding site" evidence="1">
    <location>
        <begin position="425"/>
        <end position="428"/>
    </location>
    <ligand>
        <name>meso-2,6-diaminopimelate</name>
        <dbReference type="ChEBI" id="CHEBI:57791"/>
    </ligand>
</feature>
<feature type="binding site" evidence="1">
    <location>
        <position position="477"/>
    </location>
    <ligand>
        <name>meso-2,6-diaminopimelate</name>
        <dbReference type="ChEBI" id="CHEBI:57791"/>
    </ligand>
</feature>
<feature type="binding site" evidence="1">
    <location>
        <position position="481"/>
    </location>
    <ligand>
        <name>meso-2,6-diaminopimelate</name>
        <dbReference type="ChEBI" id="CHEBI:57791"/>
    </ligand>
</feature>
<feature type="modified residue" description="N6-carboxylysine" evidence="1">
    <location>
        <position position="233"/>
    </location>
</feature>
<proteinExistence type="inferred from homology"/>
<protein>
    <recommendedName>
        <fullName evidence="1">UDP-N-acetylmuramoyl-L-alanyl-D-glutamate--2,6-diaminopimelate ligase</fullName>
        <ecNumber evidence="1">6.3.2.13</ecNumber>
    </recommendedName>
    <alternativeName>
        <fullName evidence="1">Meso-A2pm-adding enzyme</fullName>
    </alternativeName>
    <alternativeName>
        <fullName evidence="1">Meso-diaminopimelate-adding enzyme</fullName>
    </alternativeName>
    <alternativeName>
        <fullName evidence="1">UDP-MurNAc-L-Ala-D-Glu:meso-diaminopimelate ligase</fullName>
    </alternativeName>
    <alternativeName>
        <fullName evidence="1">UDP-MurNAc-tripeptide synthetase</fullName>
    </alternativeName>
    <alternativeName>
        <fullName evidence="1">UDP-N-acetylmuramyl-tripeptide synthetase</fullName>
    </alternativeName>
</protein>
<organism>
    <name type="scientific">Leptospira interrogans serogroup Icterohaemorrhagiae serovar copenhageni (strain Fiocruz L1-130)</name>
    <dbReference type="NCBI Taxonomy" id="267671"/>
    <lineage>
        <taxon>Bacteria</taxon>
        <taxon>Pseudomonadati</taxon>
        <taxon>Spirochaetota</taxon>
        <taxon>Spirochaetia</taxon>
        <taxon>Leptospirales</taxon>
        <taxon>Leptospiraceae</taxon>
        <taxon>Leptospira</taxon>
    </lineage>
</organism>
<comment type="function">
    <text evidence="1">Catalyzes the addition of meso-diaminopimelic acid to the nucleotide precursor UDP-N-acetylmuramoyl-L-alanyl-D-glutamate (UMAG) in the biosynthesis of bacterial cell-wall peptidoglycan.</text>
</comment>
<comment type="catalytic activity">
    <reaction evidence="1">
        <text>UDP-N-acetyl-alpha-D-muramoyl-L-alanyl-D-glutamate + meso-2,6-diaminopimelate + ATP = UDP-N-acetyl-alpha-D-muramoyl-L-alanyl-gamma-D-glutamyl-meso-2,6-diaminopimelate + ADP + phosphate + H(+)</text>
        <dbReference type="Rhea" id="RHEA:23676"/>
        <dbReference type="ChEBI" id="CHEBI:15378"/>
        <dbReference type="ChEBI" id="CHEBI:30616"/>
        <dbReference type="ChEBI" id="CHEBI:43474"/>
        <dbReference type="ChEBI" id="CHEBI:57791"/>
        <dbReference type="ChEBI" id="CHEBI:83900"/>
        <dbReference type="ChEBI" id="CHEBI:83905"/>
        <dbReference type="ChEBI" id="CHEBI:456216"/>
        <dbReference type="EC" id="6.3.2.13"/>
    </reaction>
</comment>
<comment type="cofactor">
    <cofactor evidence="1">
        <name>Mg(2+)</name>
        <dbReference type="ChEBI" id="CHEBI:18420"/>
    </cofactor>
</comment>
<comment type="pathway">
    <text evidence="1">Cell wall biogenesis; peptidoglycan biosynthesis.</text>
</comment>
<comment type="subcellular location">
    <subcellularLocation>
        <location evidence="1">Cytoplasm</location>
    </subcellularLocation>
</comment>
<comment type="PTM">
    <text evidence="1">Carboxylation is probably crucial for Mg(2+) binding and, consequently, for the gamma-phosphate positioning of ATP.</text>
</comment>
<comment type="similarity">
    <text evidence="1">Belongs to the MurCDEF family. MurE subfamily.</text>
</comment>
<keyword id="KW-0067">ATP-binding</keyword>
<keyword id="KW-0131">Cell cycle</keyword>
<keyword id="KW-0132">Cell division</keyword>
<keyword id="KW-0133">Cell shape</keyword>
<keyword id="KW-0961">Cell wall biogenesis/degradation</keyword>
<keyword id="KW-0963">Cytoplasm</keyword>
<keyword id="KW-0436">Ligase</keyword>
<keyword id="KW-0460">Magnesium</keyword>
<keyword id="KW-0547">Nucleotide-binding</keyword>
<keyword id="KW-0573">Peptidoglycan synthesis</keyword>
<dbReference type="EC" id="6.3.2.13" evidence="1"/>
<dbReference type="EMBL" id="AE016823">
    <property type="protein sequence ID" value="AAS70453.1"/>
    <property type="molecule type" value="Genomic_DNA"/>
</dbReference>
<dbReference type="RefSeq" id="WP_000782604.1">
    <property type="nucleotide sequence ID" value="NC_005823.1"/>
</dbReference>
<dbReference type="SMR" id="Q72R81"/>
<dbReference type="KEGG" id="lic:LIC_11867"/>
<dbReference type="HOGENOM" id="CLU_022291_2_1_12"/>
<dbReference type="UniPathway" id="UPA00219"/>
<dbReference type="Proteomes" id="UP000007037">
    <property type="component" value="Chromosome I"/>
</dbReference>
<dbReference type="GO" id="GO:0005737">
    <property type="term" value="C:cytoplasm"/>
    <property type="evidence" value="ECO:0007669"/>
    <property type="project" value="UniProtKB-SubCell"/>
</dbReference>
<dbReference type="GO" id="GO:0005524">
    <property type="term" value="F:ATP binding"/>
    <property type="evidence" value="ECO:0007669"/>
    <property type="project" value="UniProtKB-UniRule"/>
</dbReference>
<dbReference type="GO" id="GO:0000287">
    <property type="term" value="F:magnesium ion binding"/>
    <property type="evidence" value="ECO:0007669"/>
    <property type="project" value="UniProtKB-UniRule"/>
</dbReference>
<dbReference type="GO" id="GO:0008765">
    <property type="term" value="F:UDP-N-acetylmuramoylalanyl-D-glutamate-2,6-diaminopimelate ligase activity"/>
    <property type="evidence" value="ECO:0007669"/>
    <property type="project" value="UniProtKB-UniRule"/>
</dbReference>
<dbReference type="GO" id="GO:0051301">
    <property type="term" value="P:cell division"/>
    <property type="evidence" value="ECO:0007669"/>
    <property type="project" value="UniProtKB-KW"/>
</dbReference>
<dbReference type="GO" id="GO:0071555">
    <property type="term" value="P:cell wall organization"/>
    <property type="evidence" value="ECO:0007669"/>
    <property type="project" value="UniProtKB-KW"/>
</dbReference>
<dbReference type="GO" id="GO:0009252">
    <property type="term" value="P:peptidoglycan biosynthetic process"/>
    <property type="evidence" value="ECO:0007669"/>
    <property type="project" value="UniProtKB-UniRule"/>
</dbReference>
<dbReference type="GO" id="GO:0008360">
    <property type="term" value="P:regulation of cell shape"/>
    <property type="evidence" value="ECO:0007669"/>
    <property type="project" value="UniProtKB-KW"/>
</dbReference>
<dbReference type="Gene3D" id="3.90.190.20">
    <property type="entry name" value="Mur ligase, C-terminal domain"/>
    <property type="match status" value="1"/>
</dbReference>
<dbReference type="Gene3D" id="3.40.1190.10">
    <property type="entry name" value="Mur-like, catalytic domain"/>
    <property type="match status" value="1"/>
</dbReference>
<dbReference type="HAMAP" id="MF_00208">
    <property type="entry name" value="MurE"/>
    <property type="match status" value="1"/>
</dbReference>
<dbReference type="InterPro" id="IPR036565">
    <property type="entry name" value="Mur-like_cat_sf"/>
</dbReference>
<dbReference type="InterPro" id="IPR004101">
    <property type="entry name" value="Mur_ligase_C"/>
</dbReference>
<dbReference type="InterPro" id="IPR036615">
    <property type="entry name" value="Mur_ligase_C_dom_sf"/>
</dbReference>
<dbReference type="InterPro" id="IPR013221">
    <property type="entry name" value="Mur_ligase_cen"/>
</dbReference>
<dbReference type="InterPro" id="IPR005761">
    <property type="entry name" value="UDP-N-AcMur-Glu-dNH2Pim_ligase"/>
</dbReference>
<dbReference type="NCBIfam" id="TIGR01085">
    <property type="entry name" value="murE"/>
    <property type="match status" value="1"/>
</dbReference>
<dbReference type="NCBIfam" id="NF001126">
    <property type="entry name" value="PRK00139.1-4"/>
    <property type="match status" value="1"/>
</dbReference>
<dbReference type="PANTHER" id="PTHR23135">
    <property type="entry name" value="MUR LIGASE FAMILY MEMBER"/>
    <property type="match status" value="1"/>
</dbReference>
<dbReference type="PANTHER" id="PTHR23135:SF4">
    <property type="entry name" value="UDP-N-ACETYLMURAMOYL-L-ALANYL-D-GLUTAMATE--2,6-DIAMINOPIMELATE LIGASE MURE HOMOLOG, CHLOROPLASTIC"/>
    <property type="match status" value="1"/>
</dbReference>
<dbReference type="Pfam" id="PF02875">
    <property type="entry name" value="Mur_ligase_C"/>
    <property type="match status" value="1"/>
</dbReference>
<dbReference type="Pfam" id="PF08245">
    <property type="entry name" value="Mur_ligase_M"/>
    <property type="match status" value="1"/>
</dbReference>
<dbReference type="SUPFAM" id="SSF53623">
    <property type="entry name" value="MurD-like peptide ligases, catalytic domain"/>
    <property type="match status" value="1"/>
</dbReference>
<dbReference type="SUPFAM" id="SSF53244">
    <property type="entry name" value="MurD-like peptide ligases, peptide-binding domain"/>
    <property type="match status" value="1"/>
</dbReference>
<accession>Q72R81</accession>
<gene>
    <name evidence="1" type="primary">murE</name>
    <name type="ordered locus">LIC_11867</name>
</gene>
<reference key="1">
    <citation type="journal article" date="2004" name="J. Bacteriol.">
        <title>Comparative genomics of two Leptospira interrogans serovars reveals novel insights into physiology and pathogenesis.</title>
        <authorList>
            <person name="Nascimento A.L.T.O."/>
            <person name="Ko A.I."/>
            <person name="Martins E.A.L."/>
            <person name="Monteiro-Vitorello C.B."/>
            <person name="Ho P.L."/>
            <person name="Haake D.A."/>
            <person name="Verjovski-Almeida S."/>
            <person name="Hartskeerl R.A."/>
            <person name="Marques M.V."/>
            <person name="Oliveira M.C."/>
            <person name="Menck C.F.M."/>
            <person name="Leite L.C.C."/>
            <person name="Carrer H."/>
            <person name="Coutinho L.L."/>
            <person name="Degrave W.M."/>
            <person name="Dellagostin O.A."/>
            <person name="El-Dorry H."/>
            <person name="Ferro E.S."/>
            <person name="Ferro M.I.T."/>
            <person name="Furlan L.R."/>
            <person name="Gamberini M."/>
            <person name="Giglioti E.A."/>
            <person name="Goes-Neto A."/>
            <person name="Goldman G.H."/>
            <person name="Goldman M.H.S."/>
            <person name="Harakava R."/>
            <person name="Jeronimo S.M.B."/>
            <person name="Junqueira-de-Azevedo I.L.M."/>
            <person name="Kimura E.T."/>
            <person name="Kuramae E.E."/>
            <person name="Lemos E.G.M."/>
            <person name="Lemos M.V.F."/>
            <person name="Marino C.L."/>
            <person name="Nunes L.R."/>
            <person name="de Oliveira R.C."/>
            <person name="Pereira G.G."/>
            <person name="Reis M.S."/>
            <person name="Schriefer A."/>
            <person name="Siqueira W.J."/>
            <person name="Sommer P."/>
            <person name="Tsai S.M."/>
            <person name="Simpson A.J.G."/>
            <person name="Ferro J.A."/>
            <person name="Camargo L.E.A."/>
            <person name="Kitajima J.P."/>
            <person name="Setubal J.C."/>
            <person name="Van Sluys M.A."/>
        </authorList>
    </citation>
    <scope>NUCLEOTIDE SEQUENCE [LARGE SCALE GENOMIC DNA]</scope>
    <source>
        <strain>Fiocruz L1-130</strain>
    </source>
</reference>
<sequence length="506" mass="56318">MKMKLTSLLLKFPEIKLKSFPSGKNPDSIEIEYIQSDSRKTNKNDIFCVADSIGSKKKEFISNAKASLILLRTDSNVLNDLLEVMNSSKIFLECEIDPEQLQGRIASFLLGHPSKDLDIVAVTGTNGKTSLTNILFSLAKDQGINCGLIGTIGVKFGDRVIDTGYTTPDASSLNLILKEMKEEGITTVFMEASSHGLKLGRMNGISVRAGVFTNLTQDHLDFHSDMEDYFESKFRLFEILDFSKSTFAVLDYSAPNGSKLYHKILNRFPDLLIYALDDIYRKWKISDISLNLQGTSYVLGLPGNQERKISTNLLGSFNVRNTALAFLTGIGIGLDLEKMSNSLEKIPQIPGRFQIIYSKDRSRMAVVDYAHTPDALENIIRSVRDSQPKCLITLFGCGGDRDRTKRPKMARIAEELSDQVILTSDNPRTEKPETILDEIQTGFSSGFIPLLREVDRAKAIVEGISCLPEGGCLLVAGKGHEEYQIIGKEKRHFSDVEEVQKAFGLF</sequence>
<evidence type="ECO:0000255" key="1">
    <source>
        <dbReference type="HAMAP-Rule" id="MF_00208"/>
    </source>
</evidence>
<name>MURE_LEPIC</name>